<feature type="chain" id="PRO_0000288864" description="Golgi-associated kinase 1B">
    <location>
        <begin position="1"/>
        <end position="519"/>
    </location>
</feature>
<feature type="topological domain" description="Cytoplasmic" evidence="2">
    <location>
        <begin position="1"/>
        <end position="37"/>
    </location>
</feature>
<feature type="transmembrane region" description="Helical; Signal-anchor for type II membrane protein" evidence="2">
    <location>
        <begin position="38"/>
        <end position="55"/>
    </location>
</feature>
<feature type="topological domain" description="Extracellular" evidence="2">
    <location>
        <begin position="56"/>
        <end position="519"/>
    </location>
</feature>
<feature type="region of interest" description="Disordered" evidence="3">
    <location>
        <begin position="62"/>
        <end position="103"/>
    </location>
</feature>
<feature type="compositionally biased region" description="Basic and acidic residues" evidence="3">
    <location>
        <begin position="68"/>
        <end position="77"/>
    </location>
</feature>
<feature type="glycosylation site" description="N-linked (GlcNAc...) asparagine" evidence="2">
    <location>
        <position position="289"/>
    </location>
</feature>
<feature type="splice variant" id="VSP_025794" description="In isoform 3." evidence="5">
    <original>DGRPCPIILWDASLSSASNDTHSSVKLT</original>
    <variation>GNRFTCFVICSCWGFWFIFFFPSLSFSK</variation>
    <location>
        <begin position="304"/>
        <end position="331"/>
    </location>
</feature>
<feature type="splice variant" id="VSP_025795" description="In isoform 2." evidence="6">
    <original>DGRPCPIILWDASLSSASNDTHSSVK</original>
    <variation>AAAAACLSMRLAFFIFPAWEDMRVPGKCCIGHAR</variation>
    <location>
        <begin position="304"/>
        <end position="329"/>
    </location>
</feature>
<feature type="splice variant" id="VSP_025796" description="In isoform 3." evidence="5">
    <location>
        <begin position="332"/>
        <end position="519"/>
    </location>
</feature>
<feature type="sequence variant" id="VAR_032514" description="In dbSNP:rs17857283." evidence="4">
    <original>G</original>
    <variation>S</variation>
    <location>
        <position position="432"/>
    </location>
</feature>
<gene>
    <name evidence="9" type="primary">GASK1B</name>
    <name evidence="9" type="synonym">C4orf18</name>
    <name evidence="1" type="synonym">ENED</name>
    <name evidence="9" type="synonym">FAM198B</name>
    <name type="ORF">AD021</name>
    <name type="ORF">UNQ2512/PRO6001</name>
</gene>
<keyword id="KW-0025">Alternative splicing</keyword>
<keyword id="KW-0325">Glycoprotein</keyword>
<keyword id="KW-0333">Golgi apparatus</keyword>
<keyword id="KW-0472">Membrane</keyword>
<keyword id="KW-1267">Proteomics identification</keyword>
<keyword id="KW-1185">Reference proteome</keyword>
<keyword id="KW-0735">Signal-anchor</keyword>
<keyword id="KW-0812">Transmembrane</keyword>
<keyword id="KW-1133">Transmembrane helix</keyword>
<accession>Q6UWH4</accession>
<accession>Q498Z3</accession>
<accession>Q6IAF9</accession>
<accession>Q6ZMF2</accession>
<accession>Q86XL0</accession>
<reference key="1">
    <citation type="journal article" date="2003" name="Genome Res.">
        <title>The secreted protein discovery initiative (SPDI), a large-scale effort to identify novel human secreted and transmembrane proteins: a bioinformatics assessment.</title>
        <authorList>
            <person name="Clark H.F."/>
            <person name="Gurney A.L."/>
            <person name="Abaya E."/>
            <person name="Baker K."/>
            <person name="Baldwin D.T."/>
            <person name="Brush J."/>
            <person name="Chen J."/>
            <person name="Chow B."/>
            <person name="Chui C."/>
            <person name="Crowley C."/>
            <person name="Currell B."/>
            <person name="Deuel B."/>
            <person name="Dowd P."/>
            <person name="Eaton D."/>
            <person name="Foster J.S."/>
            <person name="Grimaldi C."/>
            <person name="Gu Q."/>
            <person name="Hass P.E."/>
            <person name="Heldens S."/>
            <person name="Huang A."/>
            <person name="Kim H.S."/>
            <person name="Klimowski L."/>
            <person name="Jin Y."/>
            <person name="Johnson S."/>
            <person name="Lee J."/>
            <person name="Lewis L."/>
            <person name="Liao D."/>
            <person name="Mark M.R."/>
            <person name="Robbie E."/>
            <person name="Sanchez C."/>
            <person name="Schoenfeld J."/>
            <person name="Seshagiri S."/>
            <person name="Simmons L."/>
            <person name="Singh J."/>
            <person name="Smith V."/>
            <person name="Stinson J."/>
            <person name="Vagts A."/>
            <person name="Vandlen R.L."/>
            <person name="Watanabe C."/>
            <person name="Wieand D."/>
            <person name="Woods K."/>
            <person name="Xie M.-H."/>
            <person name="Yansura D.G."/>
            <person name="Yi S."/>
            <person name="Yu G."/>
            <person name="Yuan J."/>
            <person name="Zhang M."/>
            <person name="Zhang Z."/>
            <person name="Goddard A.D."/>
            <person name="Wood W.I."/>
            <person name="Godowski P.J."/>
            <person name="Gray A.M."/>
        </authorList>
    </citation>
    <scope>NUCLEOTIDE SEQUENCE [LARGE SCALE MRNA] (ISOFORM 1)</scope>
</reference>
<reference key="2">
    <citation type="journal article" date="2004" name="Nat. Genet.">
        <title>Complete sequencing and characterization of 21,243 full-length human cDNAs.</title>
        <authorList>
            <person name="Ota T."/>
            <person name="Suzuki Y."/>
            <person name="Nishikawa T."/>
            <person name="Otsuki T."/>
            <person name="Sugiyama T."/>
            <person name="Irie R."/>
            <person name="Wakamatsu A."/>
            <person name="Hayashi K."/>
            <person name="Sato H."/>
            <person name="Nagai K."/>
            <person name="Kimura K."/>
            <person name="Makita H."/>
            <person name="Sekine M."/>
            <person name="Obayashi M."/>
            <person name="Nishi T."/>
            <person name="Shibahara T."/>
            <person name="Tanaka T."/>
            <person name="Ishii S."/>
            <person name="Yamamoto J."/>
            <person name="Saito K."/>
            <person name="Kawai Y."/>
            <person name="Isono Y."/>
            <person name="Nakamura Y."/>
            <person name="Nagahari K."/>
            <person name="Murakami K."/>
            <person name="Yasuda T."/>
            <person name="Iwayanagi T."/>
            <person name="Wagatsuma M."/>
            <person name="Shiratori A."/>
            <person name="Sudo H."/>
            <person name="Hosoiri T."/>
            <person name="Kaku Y."/>
            <person name="Kodaira H."/>
            <person name="Kondo H."/>
            <person name="Sugawara M."/>
            <person name="Takahashi M."/>
            <person name="Kanda K."/>
            <person name="Yokoi T."/>
            <person name="Furuya T."/>
            <person name="Kikkawa E."/>
            <person name="Omura Y."/>
            <person name="Abe K."/>
            <person name="Kamihara K."/>
            <person name="Katsuta N."/>
            <person name="Sato K."/>
            <person name="Tanikawa M."/>
            <person name="Yamazaki M."/>
            <person name="Ninomiya K."/>
            <person name="Ishibashi T."/>
            <person name="Yamashita H."/>
            <person name="Murakawa K."/>
            <person name="Fujimori K."/>
            <person name="Tanai H."/>
            <person name="Kimata M."/>
            <person name="Watanabe M."/>
            <person name="Hiraoka S."/>
            <person name="Chiba Y."/>
            <person name="Ishida S."/>
            <person name="Ono Y."/>
            <person name="Takiguchi S."/>
            <person name="Watanabe S."/>
            <person name="Yosida M."/>
            <person name="Hotuta T."/>
            <person name="Kusano J."/>
            <person name="Kanehori K."/>
            <person name="Takahashi-Fujii A."/>
            <person name="Hara H."/>
            <person name="Tanase T.-O."/>
            <person name="Nomura Y."/>
            <person name="Togiya S."/>
            <person name="Komai F."/>
            <person name="Hara R."/>
            <person name="Takeuchi K."/>
            <person name="Arita M."/>
            <person name="Imose N."/>
            <person name="Musashino K."/>
            <person name="Yuuki H."/>
            <person name="Oshima A."/>
            <person name="Sasaki N."/>
            <person name="Aotsuka S."/>
            <person name="Yoshikawa Y."/>
            <person name="Matsunawa H."/>
            <person name="Ichihara T."/>
            <person name="Shiohata N."/>
            <person name="Sano S."/>
            <person name="Moriya S."/>
            <person name="Momiyama H."/>
            <person name="Satoh N."/>
            <person name="Takami S."/>
            <person name="Terashima Y."/>
            <person name="Suzuki O."/>
            <person name="Nakagawa S."/>
            <person name="Senoh A."/>
            <person name="Mizoguchi H."/>
            <person name="Goto Y."/>
            <person name="Shimizu F."/>
            <person name="Wakebe H."/>
            <person name="Hishigaki H."/>
            <person name="Watanabe T."/>
            <person name="Sugiyama A."/>
            <person name="Takemoto M."/>
            <person name="Kawakami B."/>
            <person name="Yamazaki M."/>
            <person name="Watanabe K."/>
            <person name="Kumagai A."/>
            <person name="Itakura S."/>
            <person name="Fukuzumi Y."/>
            <person name="Fujimori Y."/>
            <person name="Komiyama M."/>
            <person name="Tashiro H."/>
            <person name="Tanigami A."/>
            <person name="Fujiwara T."/>
            <person name="Ono T."/>
            <person name="Yamada K."/>
            <person name="Fujii Y."/>
            <person name="Ozaki K."/>
            <person name="Hirao M."/>
            <person name="Ohmori Y."/>
            <person name="Kawabata A."/>
            <person name="Hikiji T."/>
            <person name="Kobatake N."/>
            <person name="Inagaki H."/>
            <person name="Ikema Y."/>
            <person name="Okamoto S."/>
            <person name="Okitani R."/>
            <person name="Kawakami T."/>
            <person name="Noguchi S."/>
            <person name="Itoh T."/>
            <person name="Shigeta K."/>
            <person name="Senba T."/>
            <person name="Matsumura K."/>
            <person name="Nakajima Y."/>
            <person name="Mizuno T."/>
            <person name="Morinaga M."/>
            <person name="Sasaki M."/>
            <person name="Togashi T."/>
            <person name="Oyama M."/>
            <person name="Hata H."/>
            <person name="Watanabe M."/>
            <person name="Komatsu T."/>
            <person name="Mizushima-Sugano J."/>
            <person name="Satoh T."/>
            <person name="Shirai Y."/>
            <person name="Takahashi Y."/>
            <person name="Nakagawa K."/>
            <person name="Okumura K."/>
            <person name="Nagase T."/>
            <person name="Nomura N."/>
            <person name="Kikuchi H."/>
            <person name="Masuho Y."/>
            <person name="Yamashita R."/>
            <person name="Nakai K."/>
            <person name="Yada T."/>
            <person name="Nakamura Y."/>
            <person name="Ohara O."/>
            <person name="Isogai T."/>
            <person name="Sugano S."/>
        </authorList>
    </citation>
    <scope>NUCLEOTIDE SEQUENCE [LARGE SCALE MRNA] (ISOFORM 3)</scope>
</reference>
<reference key="3">
    <citation type="journal article" date="2004" name="Genome Res.">
        <title>The status, quality, and expansion of the NIH full-length cDNA project: the Mammalian Gene Collection (MGC).</title>
        <authorList>
            <consortium name="The MGC Project Team"/>
        </authorList>
    </citation>
    <scope>NUCLEOTIDE SEQUENCE [LARGE SCALE MRNA] (ISOFORM 2)</scope>
    <scope>NUCLEOTIDE SEQUENCE [LARGE SCALE MRNA] OF 238-519 (ISOFORM 1)</scope>
    <scope>VARIANT SER-432</scope>
    <source>
        <tissue>Brain</tissue>
    </source>
</reference>
<reference key="4">
    <citation type="journal article" date="2007" name="BMC Genomics">
        <title>The full-ORF clone resource of the German cDNA consortium.</title>
        <authorList>
            <person name="Bechtel S."/>
            <person name="Rosenfelder H."/>
            <person name="Duda A."/>
            <person name="Schmidt C.P."/>
            <person name="Ernst U."/>
            <person name="Wellenreuther R."/>
            <person name="Mehrle A."/>
            <person name="Schuster C."/>
            <person name="Bahr A."/>
            <person name="Bloecker H."/>
            <person name="Heubner D."/>
            <person name="Hoerlein A."/>
            <person name="Michel G."/>
            <person name="Wedler H."/>
            <person name="Koehrer K."/>
            <person name="Ottenwaelder B."/>
            <person name="Poustka A."/>
            <person name="Wiemann S."/>
            <person name="Schupp I."/>
        </authorList>
    </citation>
    <scope>NUCLEOTIDE SEQUENCE [LARGE SCALE MRNA] OF 274-519 (ISOFORM 1)</scope>
    <source>
        <tissue>Testis</tissue>
    </source>
</reference>
<reference key="5">
    <citation type="journal article" date="2000" name="EMBO Rep.">
        <title>Systematic subcellular localization of novel proteins identified by large-scale cDNA sequencing.</title>
        <authorList>
            <person name="Simpson J.C."/>
            <person name="Wellenreuther R."/>
            <person name="Poustka A."/>
            <person name="Pepperkok R."/>
            <person name="Wiemann S."/>
        </authorList>
    </citation>
    <scope>SUBCELLULAR LOCATION</scope>
</reference>
<organism>
    <name type="scientific">Homo sapiens</name>
    <name type="common">Human</name>
    <dbReference type="NCBI Taxonomy" id="9606"/>
    <lineage>
        <taxon>Eukaryota</taxon>
        <taxon>Metazoa</taxon>
        <taxon>Chordata</taxon>
        <taxon>Craniata</taxon>
        <taxon>Vertebrata</taxon>
        <taxon>Euteleostomi</taxon>
        <taxon>Mammalia</taxon>
        <taxon>Eutheria</taxon>
        <taxon>Euarchontoglires</taxon>
        <taxon>Primates</taxon>
        <taxon>Haplorrhini</taxon>
        <taxon>Catarrhini</taxon>
        <taxon>Hominidae</taxon>
        <taxon>Homo</taxon>
    </lineage>
</organism>
<sequence>MTCPDKPGQLINWFICSLCVPRVRKLWSSRRPRTRRNLLLGTACAIYLGFLVSQVGRASLQHGQAAEKGPHRSRDTAEPSFPEIPLDGTLAPPESQGNGSTLQPNVVYITLRSKRSKPANIRGTVKPKRRKKHAVASAAPGQEALVGPSLQPQEAAREADAVAPGYAQGANLVKIGERPWRLVRGPGVRAGGPDFLQPSSRESNIRIYSESAPSWLSKDDIRRMRLLADSAVAGLRPVSSRSGARLLVLEGGAPGAVLRCGPSPCGLLKQPLDMSEVFAFHLDRILGLNRTLPSVSRKAEFIQDGRPCPIILWDASLSSASNDTHSSVKLTWGTYQQLLKQKCWQNGRVPKPESGCTEIHHHEWSKMALFDFLLQIYNRLDTNCCGFRPRKEDACVQNGLRPKCDDQGSAALAHIIQRKHDPRHLVFIDNKGFFDRSEDNLNFKLLEGIKEFPASAVSVLKSQHLRQKLLQSLFLDKVYWESQGGRQGIEKLIDVIEHRAKILITYINAHGVKVLPMNE</sequence>
<evidence type="ECO:0000250" key="1">
    <source>
        <dbReference type="UniProtKB" id="Q3UPI1"/>
    </source>
</evidence>
<evidence type="ECO:0000255" key="2"/>
<evidence type="ECO:0000256" key="3">
    <source>
        <dbReference type="SAM" id="MobiDB-lite"/>
    </source>
</evidence>
<evidence type="ECO:0000269" key="4">
    <source>
    </source>
</evidence>
<evidence type="ECO:0000303" key="5">
    <source>
    </source>
</evidence>
<evidence type="ECO:0000303" key="6">
    <source>
    </source>
</evidence>
<evidence type="ECO:0000305" key="7"/>
<evidence type="ECO:0000305" key="8">
    <source>
    </source>
</evidence>
<evidence type="ECO:0000312" key="9">
    <source>
        <dbReference type="HGNC" id="HGNC:25312"/>
    </source>
</evidence>
<comment type="subcellular location">
    <subcellularLocation>
        <location evidence="8">Golgi apparatus membrane</location>
        <topology evidence="8">Single-pass type II membrane protein</topology>
    </subcellularLocation>
</comment>
<comment type="alternative products">
    <event type="alternative splicing"/>
    <isoform>
        <id>Q6UWH4-1</id>
        <name>1</name>
        <sequence type="displayed"/>
    </isoform>
    <isoform>
        <id>Q6UWH4-2</id>
        <name>2</name>
        <sequence type="described" ref="VSP_025795"/>
    </isoform>
    <isoform>
        <id>Q6UWH4-3</id>
        <name>3</name>
        <sequence type="described" ref="VSP_025794 VSP_025796"/>
    </isoform>
</comment>
<comment type="similarity">
    <text evidence="7">Belongs to the GASK family.</text>
</comment>
<name>GAK1B_HUMAN</name>
<proteinExistence type="evidence at protein level"/>
<protein>
    <recommendedName>
        <fullName evidence="9">Golgi-associated kinase 1B</fullName>
    </recommendedName>
    <alternativeName>
        <fullName evidence="1">Expressed in nerve and epithelium during development</fullName>
    </alternativeName>
    <alternativeName>
        <fullName evidence="9">Protein FAM198B</fullName>
    </alternativeName>
</protein>
<dbReference type="EMBL" id="AY358785">
    <property type="protein sequence ID" value="AAQ89145.1"/>
    <property type="molecule type" value="mRNA"/>
</dbReference>
<dbReference type="EMBL" id="AK172805">
    <property type="protein sequence ID" value="BAD18776.1"/>
    <property type="molecule type" value="mRNA"/>
</dbReference>
<dbReference type="EMBL" id="BC043193">
    <property type="protein sequence ID" value="AAH43193.1"/>
    <property type="molecule type" value="mRNA"/>
</dbReference>
<dbReference type="EMBL" id="BC100016">
    <property type="protein sequence ID" value="AAI00017.1"/>
    <property type="molecule type" value="mRNA"/>
</dbReference>
<dbReference type="EMBL" id="CR457196">
    <property type="protein sequence ID" value="CAG33477.1"/>
    <property type="molecule type" value="mRNA"/>
</dbReference>
<dbReference type="CCDS" id="CCDS34087.1">
    <molecule id="Q6UWH4-2"/>
</dbReference>
<dbReference type="CCDS" id="CCDS3798.1">
    <molecule id="Q6UWH4-1"/>
</dbReference>
<dbReference type="RefSeq" id="NP_001026870.2">
    <molecule id="Q6UWH4-2"/>
    <property type="nucleotide sequence ID" value="NM_001031700.3"/>
</dbReference>
<dbReference type="RefSeq" id="NP_001121896.1">
    <molecule id="Q6UWH4-1"/>
    <property type="nucleotide sequence ID" value="NM_001128424.2"/>
</dbReference>
<dbReference type="RefSeq" id="NP_057697.2">
    <molecule id="Q6UWH4-1"/>
    <property type="nucleotide sequence ID" value="NM_016613.6"/>
</dbReference>
<dbReference type="RefSeq" id="XP_024309846.1">
    <molecule id="Q6UWH4-1"/>
    <property type="nucleotide sequence ID" value="XM_024454078.2"/>
</dbReference>
<dbReference type="RefSeq" id="XP_024309847.1">
    <molecule id="Q6UWH4-1"/>
    <property type="nucleotide sequence ID" value="XM_024454079.2"/>
</dbReference>
<dbReference type="RefSeq" id="XP_047271721.1">
    <molecule id="Q6UWH4-2"/>
    <property type="nucleotide sequence ID" value="XM_047415765.1"/>
</dbReference>
<dbReference type="SMR" id="Q6UWH4"/>
<dbReference type="BioGRID" id="119464">
    <property type="interactions" value="5"/>
</dbReference>
<dbReference type="FunCoup" id="Q6UWH4">
    <property type="interactions" value="357"/>
</dbReference>
<dbReference type="IntAct" id="Q6UWH4">
    <property type="interactions" value="2"/>
</dbReference>
<dbReference type="STRING" id="9606.ENSP00000377396"/>
<dbReference type="GlyCosmos" id="Q6UWH4">
    <property type="glycosylation" value="2 sites, 1 glycan"/>
</dbReference>
<dbReference type="GlyGen" id="Q6UWH4">
    <property type="glycosylation" value="4 sites, 2 O-linked glycans (3 sites)"/>
</dbReference>
<dbReference type="iPTMnet" id="Q6UWH4"/>
<dbReference type="PhosphoSitePlus" id="Q6UWH4"/>
<dbReference type="SwissPalm" id="Q6UWH4"/>
<dbReference type="BioMuta" id="FAM198B"/>
<dbReference type="DMDM" id="74738096"/>
<dbReference type="jPOST" id="Q6UWH4"/>
<dbReference type="MassIVE" id="Q6UWH4"/>
<dbReference type="PaxDb" id="9606-ENSP00000377396"/>
<dbReference type="PeptideAtlas" id="Q6UWH4"/>
<dbReference type="ProteomicsDB" id="67478">
    <molecule id="Q6UWH4-1"/>
</dbReference>
<dbReference type="ProteomicsDB" id="67479">
    <molecule id="Q6UWH4-2"/>
</dbReference>
<dbReference type="ProteomicsDB" id="67480">
    <molecule id="Q6UWH4-3"/>
</dbReference>
<dbReference type="Antibodypedia" id="2027">
    <property type="antibodies" value="74 antibodies from 17 providers"/>
</dbReference>
<dbReference type="DNASU" id="51313"/>
<dbReference type="Ensembl" id="ENST00000296530.12">
    <molecule id="Q6UWH4-1"/>
    <property type="protein sequence ID" value="ENSP00000296530.7"/>
    <property type="gene ID" value="ENSG00000164125.16"/>
</dbReference>
<dbReference type="Ensembl" id="ENST00000393807.9">
    <molecule id="Q6UWH4-2"/>
    <property type="protein sequence ID" value="ENSP00000377396.4"/>
    <property type="gene ID" value="ENSG00000164125.16"/>
</dbReference>
<dbReference type="Ensembl" id="ENST00000585682.6">
    <molecule id="Q6UWH4-1"/>
    <property type="protein sequence ID" value="ENSP00000465976.1"/>
    <property type="gene ID" value="ENSG00000164125.16"/>
</dbReference>
<dbReference type="Ensembl" id="ENST00000592057.1">
    <molecule id="Q6UWH4-3"/>
    <property type="protein sequence ID" value="ENSP00000466873.1"/>
    <property type="gene ID" value="ENSG00000164125.16"/>
</dbReference>
<dbReference type="GeneID" id="51313"/>
<dbReference type="KEGG" id="hsa:51313"/>
<dbReference type="MANE-Select" id="ENST00000585682.6">
    <property type="protein sequence ID" value="ENSP00000465976.1"/>
    <property type="RefSeq nucleotide sequence ID" value="NM_001128424.2"/>
    <property type="RefSeq protein sequence ID" value="NP_001121896.1"/>
</dbReference>
<dbReference type="UCSC" id="uc003ipp.5">
    <molecule id="Q6UWH4-1"/>
    <property type="organism name" value="human"/>
</dbReference>
<dbReference type="AGR" id="HGNC:25312"/>
<dbReference type="CTD" id="51313"/>
<dbReference type="DisGeNET" id="51313"/>
<dbReference type="GeneCards" id="GASK1B"/>
<dbReference type="HGNC" id="HGNC:25312">
    <property type="gene designation" value="GASK1B"/>
</dbReference>
<dbReference type="HPA" id="ENSG00000164125">
    <property type="expression patterns" value="Tissue enhanced (adrenal)"/>
</dbReference>
<dbReference type="neXtProt" id="NX_Q6UWH4"/>
<dbReference type="OpenTargets" id="ENSG00000164125"/>
<dbReference type="PharmGKB" id="PA165664058"/>
<dbReference type="VEuPathDB" id="HostDB:ENSG00000164125"/>
<dbReference type="eggNOG" id="ENOG502QU38">
    <property type="taxonomic scope" value="Eukaryota"/>
</dbReference>
<dbReference type="GeneTree" id="ENSGT00420000029769"/>
<dbReference type="HOGENOM" id="CLU_033542_2_0_1"/>
<dbReference type="InParanoid" id="Q6UWH4"/>
<dbReference type="OMA" id="PPWFSAQ"/>
<dbReference type="OrthoDB" id="10011371at2759"/>
<dbReference type="PAN-GO" id="Q6UWH4">
    <property type="GO annotations" value="1 GO annotation based on evolutionary models"/>
</dbReference>
<dbReference type="PhylomeDB" id="Q6UWH4"/>
<dbReference type="TreeFam" id="TF330994"/>
<dbReference type="PathwayCommons" id="Q6UWH4"/>
<dbReference type="SignaLink" id="Q6UWH4"/>
<dbReference type="BioGRID-ORCS" id="51313">
    <property type="hits" value="7 hits in 1138 CRISPR screens"/>
</dbReference>
<dbReference type="ChiTaRS" id="FAM198B">
    <property type="organism name" value="human"/>
</dbReference>
<dbReference type="GeneWiki" id="C4orf18"/>
<dbReference type="GenomeRNAi" id="51313"/>
<dbReference type="Pharos" id="Q6UWH4">
    <property type="development level" value="Tbio"/>
</dbReference>
<dbReference type="PRO" id="PR:Q6UWH4"/>
<dbReference type="Proteomes" id="UP000005640">
    <property type="component" value="Chromosome 4"/>
</dbReference>
<dbReference type="RNAct" id="Q6UWH4">
    <property type="molecule type" value="protein"/>
</dbReference>
<dbReference type="Bgee" id="ENSG00000164125">
    <property type="expression patterns" value="Expressed in mammary duct and 185 other cell types or tissues"/>
</dbReference>
<dbReference type="ExpressionAtlas" id="Q6UWH4">
    <property type="expression patterns" value="baseline and differential"/>
</dbReference>
<dbReference type="GO" id="GO:0005794">
    <property type="term" value="C:Golgi apparatus"/>
    <property type="evidence" value="ECO:0000314"/>
    <property type="project" value="LIFEdb"/>
</dbReference>
<dbReference type="GO" id="GO:0000139">
    <property type="term" value="C:Golgi membrane"/>
    <property type="evidence" value="ECO:0007669"/>
    <property type="project" value="UniProtKB-SubCell"/>
</dbReference>
<dbReference type="InterPro" id="IPR029207">
    <property type="entry name" value="FAM198"/>
</dbReference>
<dbReference type="PANTHER" id="PTHR15905:SF1">
    <property type="entry name" value="GOLGI-ASSOCIATED KINASE 1B"/>
    <property type="match status" value="1"/>
</dbReference>
<dbReference type="PANTHER" id="PTHR15905">
    <property type="entry name" value="GOLGI-ASSOCIATED KINASE 1B-RELATED"/>
    <property type="match status" value="1"/>
</dbReference>
<dbReference type="Pfam" id="PF15051">
    <property type="entry name" value="FAM198"/>
    <property type="match status" value="1"/>
</dbReference>